<keyword id="KW-0997">Cell inner membrane</keyword>
<keyword id="KW-1003">Cell membrane</keyword>
<keyword id="KW-0472">Membrane</keyword>
<keyword id="KW-0812">Transmembrane</keyword>
<keyword id="KW-1133">Transmembrane helix</keyword>
<keyword id="KW-0813">Transport</keyword>
<comment type="function">
    <text evidence="1">Forms an efflux pump with AaeB.</text>
</comment>
<comment type="subcellular location">
    <subcellularLocation>
        <location evidence="1">Cell inner membrane</location>
        <topology evidence="1">Single-pass membrane protein</topology>
    </subcellularLocation>
</comment>
<comment type="induction">
    <text evidence="1">Positively coregulated with aaeB and aaeX by AaeR.</text>
</comment>
<comment type="similarity">
    <text evidence="1">Belongs to the membrane fusion protein (MFP) (TC 8.A.1) family.</text>
</comment>
<organism>
    <name type="scientific">Escherichia coli (strain SE11)</name>
    <dbReference type="NCBI Taxonomy" id="409438"/>
    <lineage>
        <taxon>Bacteria</taxon>
        <taxon>Pseudomonadati</taxon>
        <taxon>Pseudomonadota</taxon>
        <taxon>Gammaproteobacteria</taxon>
        <taxon>Enterobacterales</taxon>
        <taxon>Enterobacteriaceae</taxon>
        <taxon>Escherichia</taxon>
    </lineage>
</organism>
<feature type="chain" id="PRO_1000146717" description="p-hydroxybenzoic acid efflux pump subunit AaeA">
    <location>
        <begin position="1"/>
        <end position="310"/>
    </location>
</feature>
<feature type="transmembrane region" description="Helical" evidence="1">
    <location>
        <begin position="12"/>
        <end position="32"/>
    </location>
</feature>
<dbReference type="EMBL" id="AP009240">
    <property type="protein sequence ID" value="BAG79044.1"/>
    <property type="molecule type" value="Genomic_DNA"/>
</dbReference>
<dbReference type="RefSeq" id="WP_000854033.1">
    <property type="nucleotide sequence ID" value="NC_011415.1"/>
</dbReference>
<dbReference type="SMR" id="B6I1V9"/>
<dbReference type="KEGG" id="ecy:ECSE_3520"/>
<dbReference type="HOGENOM" id="CLU_018816_15_2_6"/>
<dbReference type="Proteomes" id="UP000008199">
    <property type="component" value="Chromosome"/>
</dbReference>
<dbReference type="GO" id="GO:0005886">
    <property type="term" value="C:plasma membrane"/>
    <property type="evidence" value="ECO:0007669"/>
    <property type="project" value="UniProtKB-SubCell"/>
</dbReference>
<dbReference type="GO" id="GO:0022857">
    <property type="term" value="F:transmembrane transporter activity"/>
    <property type="evidence" value="ECO:0007669"/>
    <property type="project" value="UniProtKB-UniRule"/>
</dbReference>
<dbReference type="FunFam" id="2.40.30.170:FF:000002">
    <property type="entry name" value="p-hydroxybenzoic acid efflux pump subunit AaeA"/>
    <property type="match status" value="1"/>
</dbReference>
<dbReference type="FunFam" id="2.40.50.100:FF:000018">
    <property type="entry name" value="p-hydroxybenzoic acid efflux pump subunit AaeA"/>
    <property type="match status" value="1"/>
</dbReference>
<dbReference type="Gene3D" id="2.40.30.170">
    <property type="match status" value="1"/>
</dbReference>
<dbReference type="Gene3D" id="2.40.50.100">
    <property type="match status" value="1"/>
</dbReference>
<dbReference type="HAMAP" id="MF_01544">
    <property type="entry name" value="AaeA"/>
    <property type="match status" value="1"/>
</dbReference>
<dbReference type="InterPro" id="IPR043602">
    <property type="entry name" value="CusB-like_dom_1"/>
</dbReference>
<dbReference type="InterPro" id="IPR032317">
    <property type="entry name" value="CusB_D23"/>
</dbReference>
<dbReference type="InterPro" id="IPR050393">
    <property type="entry name" value="MFP_Efflux_Pump"/>
</dbReference>
<dbReference type="InterPro" id="IPR022871">
    <property type="entry name" value="PHBA_efflux_pump_AaeA"/>
</dbReference>
<dbReference type="InterPro" id="IPR006143">
    <property type="entry name" value="RND_pump_MFP"/>
</dbReference>
<dbReference type="NCBIfam" id="NF007850">
    <property type="entry name" value="PRK10559.1"/>
    <property type="match status" value="1"/>
</dbReference>
<dbReference type="NCBIfam" id="TIGR01730">
    <property type="entry name" value="RND_mfp"/>
    <property type="match status" value="1"/>
</dbReference>
<dbReference type="PANTHER" id="PTHR30367:SF12">
    <property type="entry name" value="P-HYDROXYBENZOIC ACID EFFLUX PUMP SUBUNIT AAEA"/>
    <property type="match status" value="1"/>
</dbReference>
<dbReference type="PANTHER" id="PTHR30367">
    <property type="entry name" value="P-HYDROXYBENZOIC ACID EFFLUX PUMP SUBUNIT AAEA-RELATED"/>
    <property type="match status" value="1"/>
</dbReference>
<dbReference type="Pfam" id="PF00529">
    <property type="entry name" value="CusB_dom_1"/>
    <property type="match status" value="1"/>
</dbReference>
<dbReference type="Pfam" id="PF16576">
    <property type="entry name" value="HlyD_D23"/>
    <property type="match status" value="1"/>
</dbReference>
<dbReference type="SUPFAM" id="SSF111369">
    <property type="entry name" value="HlyD-like secretion proteins"/>
    <property type="match status" value="1"/>
</dbReference>
<protein>
    <recommendedName>
        <fullName evidence="1">p-hydroxybenzoic acid efflux pump subunit AaeA</fullName>
        <shortName evidence="1">pHBA efflux pump protein A</shortName>
    </recommendedName>
</protein>
<sequence length="310" mass="34761">MKTLIRKFSRTAITVVLVILAFIAIFNAWVYYTESPWTRDARFSADVVAIAPDVSGLITQVNVHDNQLVKKGQVLFTIDQPRYQKALEEAQADVAYYQVLAQEKRQEAGRRNRLGVQAMSREEIDQANNVLQTVLHQLAKAQATRDLAKLDLERTVIRAPADGWVTNLNVYTGEFITRGSTAVALVKQNSFYVLAYMEETKLEGVRPGYRAEITPLGSNKVLKGTVDSVAAGVTNASSTRDDKGMATIDSNLEWVRLAQRVPVRIRLDNQQENIWPAGTTATVVVTGKQDRDESQDSFFRKMAHRLREFG</sequence>
<proteinExistence type="inferred from homology"/>
<name>AAEA_ECOSE</name>
<accession>B6I1V9</accession>
<evidence type="ECO:0000255" key="1">
    <source>
        <dbReference type="HAMAP-Rule" id="MF_01544"/>
    </source>
</evidence>
<gene>
    <name evidence="1" type="primary">aaeA</name>
    <name type="ordered locus">ECSE_3520</name>
</gene>
<reference key="1">
    <citation type="journal article" date="2008" name="DNA Res.">
        <title>Complete genome sequence and comparative analysis of the wild-type commensal Escherichia coli strain SE11 isolated from a healthy adult.</title>
        <authorList>
            <person name="Oshima K."/>
            <person name="Toh H."/>
            <person name="Ogura Y."/>
            <person name="Sasamoto H."/>
            <person name="Morita H."/>
            <person name="Park S.-H."/>
            <person name="Ooka T."/>
            <person name="Iyoda S."/>
            <person name="Taylor T.D."/>
            <person name="Hayashi T."/>
            <person name="Itoh K."/>
            <person name="Hattori M."/>
        </authorList>
    </citation>
    <scope>NUCLEOTIDE SEQUENCE [LARGE SCALE GENOMIC DNA]</scope>
    <source>
        <strain>SE11</strain>
    </source>
</reference>